<evidence type="ECO:0000250" key="1">
    <source>
        <dbReference type="UniProtKB" id="P84925"/>
    </source>
</evidence>
<evidence type="ECO:0000269" key="2">
    <source>
    </source>
</evidence>
<evidence type="ECO:0000303" key="3">
    <source>
    </source>
</evidence>
<evidence type="ECO:0000305" key="4"/>
<evidence type="ECO:0000305" key="5">
    <source>
    </source>
</evidence>
<keyword id="KW-0027">Amidation</keyword>
<keyword id="KW-0878">Amphibian defense peptide</keyword>
<keyword id="KW-0929">Antimicrobial</keyword>
<keyword id="KW-0903">Direct protein sequencing</keyword>
<keyword id="KW-0964">Secreted</keyword>
<feature type="peptide" id="PRO_0000445218" description="Dermaseptin-5.2TR" evidence="2">
    <location>
        <begin position="1"/>
        <end position="25"/>
    </location>
</feature>
<feature type="modified residue" description="Valine amide" evidence="2">
    <location>
        <position position="25"/>
    </location>
</feature>
<comment type="function">
    <text evidence="1">Has antimicrobial activity.</text>
</comment>
<comment type="subcellular location">
    <subcellularLocation>
        <location evidence="2">Secreted</location>
    </subcellularLocation>
</comment>
<comment type="tissue specificity">
    <text evidence="5">Expressed by the skin glands.</text>
</comment>
<comment type="mass spectrometry"/>
<comment type="similarity">
    <text evidence="4">Belongs to the frog skin active peptide (FSAP) family. Dermaseptin subfamily.</text>
</comment>
<reference evidence="4" key="1">
    <citation type="journal article" date="2018" name="Comp. Biochem. Physiol.">
        <title>Peptidomic analysis of the host-defense peptides in skin secretions of the Trinidadian leaf frog Phyllomedusa trinitatis (Phyllomedusidae).</title>
        <authorList>
            <person name="Mechkarska M."/>
            <person name="Coquet L."/>
            <person name="Leprince J."/>
            <person name="Auguste R.J."/>
            <person name="Jouenne T."/>
            <person name="Mangoni M.L."/>
            <person name="Conlon J.M."/>
        </authorList>
    </citation>
    <scope>PROTEIN SEQUENCE</scope>
    <scope>SUBCELLULAR LOCATION</scope>
    <scope>MASS SPECTROMETRY</scope>
    <scope>AMIDATION AT VAL-25</scope>
    <source>
        <tissue evidence="3">Skin secretion</tissue>
    </source>
</reference>
<protein>
    <recommendedName>
        <fullName evidence="3">Dermaseptin-5.2TR</fullName>
    </recommendedName>
</protein>
<accession>C0HLD1</accession>
<proteinExistence type="evidence at protein level"/>
<sequence>GLWSKIKEAAKTAGKAAMGFVDEMV</sequence>
<name>DRS52_PHYTB</name>
<organism evidence="3">
    <name type="scientific">Phyllomedusa trinitatis</name>
    <name type="common">Trinidad leaf frog</name>
    <dbReference type="NCBI Taxonomy" id="332092"/>
    <lineage>
        <taxon>Eukaryota</taxon>
        <taxon>Metazoa</taxon>
        <taxon>Chordata</taxon>
        <taxon>Craniata</taxon>
        <taxon>Vertebrata</taxon>
        <taxon>Euteleostomi</taxon>
        <taxon>Amphibia</taxon>
        <taxon>Batrachia</taxon>
        <taxon>Anura</taxon>
        <taxon>Neobatrachia</taxon>
        <taxon>Hyloidea</taxon>
        <taxon>Hylidae</taxon>
        <taxon>Phyllomedusinae</taxon>
        <taxon>Phyllomedusa</taxon>
    </lineage>
</organism>
<dbReference type="GO" id="GO:0005576">
    <property type="term" value="C:extracellular region"/>
    <property type="evidence" value="ECO:0007669"/>
    <property type="project" value="UniProtKB-SubCell"/>
</dbReference>
<dbReference type="GO" id="GO:0006952">
    <property type="term" value="P:defense response"/>
    <property type="evidence" value="ECO:0007669"/>
    <property type="project" value="UniProtKB-KW"/>
</dbReference>
<dbReference type="InterPro" id="IPR022731">
    <property type="entry name" value="Dermaseptin_dom"/>
</dbReference>
<dbReference type="Pfam" id="PF12121">
    <property type="entry name" value="DD_K"/>
    <property type="match status" value="1"/>
</dbReference>